<comment type="function">
    <text evidence="1">Forms part of the ribosomal stalk, playing a central role in the interaction of the ribosome with GTP-bound translation factors.</text>
</comment>
<comment type="subunit">
    <text evidence="1">Part of the ribosomal stalk of the 50S ribosomal subunit. The N-terminus interacts with L11 and the large rRNA to form the base of the stalk. The C-terminus forms an elongated spine to which L12 dimers bind in a sequential fashion forming a multimeric L10(L12)X complex.</text>
</comment>
<comment type="similarity">
    <text evidence="1">Belongs to the universal ribosomal protein uL10 family.</text>
</comment>
<gene>
    <name evidence="1" type="primary">rplJ</name>
    <name type="ordered locus">SO_0222</name>
</gene>
<keyword id="KW-1185">Reference proteome</keyword>
<keyword id="KW-0687">Ribonucleoprotein</keyword>
<keyword id="KW-0689">Ribosomal protein</keyword>
<keyword id="KW-0694">RNA-binding</keyword>
<keyword id="KW-0699">rRNA-binding</keyword>
<protein>
    <recommendedName>
        <fullName evidence="1">Large ribosomal subunit protein uL10</fullName>
    </recommendedName>
    <alternativeName>
        <fullName evidence="2">50S ribosomal protein L10</fullName>
    </alternativeName>
</protein>
<reference key="1">
    <citation type="journal article" date="2002" name="Nat. Biotechnol.">
        <title>Genome sequence of the dissimilatory metal ion-reducing bacterium Shewanella oneidensis.</title>
        <authorList>
            <person name="Heidelberg J.F."/>
            <person name="Paulsen I.T."/>
            <person name="Nelson K.E."/>
            <person name="Gaidos E.J."/>
            <person name="Nelson W.C."/>
            <person name="Read T.D."/>
            <person name="Eisen J.A."/>
            <person name="Seshadri R."/>
            <person name="Ward N.L."/>
            <person name="Methe B.A."/>
            <person name="Clayton R.A."/>
            <person name="Meyer T."/>
            <person name="Tsapin A."/>
            <person name="Scott J."/>
            <person name="Beanan M.J."/>
            <person name="Brinkac L.M."/>
            <person name="Daugherty S.C."/>
            <person name="DeBoy R.T."/>
            <person name="Dodson R.J."/>
            <person name="Durkin A.S."/>
            <person name="Haft D.H."/>
            <person name="Kolonay J.F."/>
            <person name="Madupu R."/>
            <person name="Peterson J.D."/>
            <person name="Umayam L.A."/>
            <person name="White O."/>
            <person name="Wolf A.M."/>
            <person name="Vamathevan J.J."/>
            <person name="Weidman J.F."/>
            <person name="Impraim M."/>
            <person name="Lee K."/>
            <person name="Berry K.J."/>
            <person name="Lee C."/>
            <person name="Mueller J."/>
            <person name="Khouri H.M."/>
            <person name="Gill J."/>
            <person name="Utterback T.R."/>
            <person name="McDonald L.A."/>
            <person name="Feldblyum T.V."/>
            <person name="Smith H.O."/>
            <person name="Venter J.C."/>
            <person name="Nealson K.H."/>
            <person name="Fraser C.M."/>
        </authorList>
    </citation>
    <scope>NUCLEOTIDE SEQUENCE [LARGE SCALE GENOMIC DNA]</scope>
    <source>
        <strain>ATCC 700550 / JCM 31522 / CIP 106686 / LMG 19005 / NCIMB 14063 / MR-1</strain>
    </source>
</reference>
<organism>
    <name type="scientific">Shewanella oneidensis (strain ATCC 700550 / JCM 31522 / CIP 106686 / LMG 19005 / NCIMB 14063 / MR-1)</name>
    <dbReference type="NCBI Taxonomy" id="211586"/>
    <lineage>
        <taxon>Bacteria</taxon>
        <taxon>Pseudomonadati</taxon>
        <taxon>Pseudomonadota</taxon>
        <taxon>Gammaproteobacteria</taxon>
        <taxon>Alteromonadales</taxon>
        <taxon>Shewanellaceae</taxon>
        <taxon>Shewanella</taxon>
    </lineage>
</organism>
<proteinExistence type="inferred from homology"/>
<sequence length="166" mass="17743">MALRLEDKKAIVAEVNEAAKGALSAVAADSRGVTVGAMTGLRKKAREAGVYVRVVRNTLARRAVEGTAFECLAETFTGPTLIAFSNEHPGAAARLLKDFAKEQANFEVKGAAFEGNFIPAADIDRLAKLPTYEEALAQLMMTMKEASAGKFVRTLAALRDQKQEAA</sequence>
<accession>Q8EK76</accession>
<dbReference type="EMBL" id="AE014299">
    <property type="protein sequence ID" value="AAN53307.1"/>
    <property type="molecule type" value="Genomic_DNA"/>
</dbReference>
<dbReference type="RefSeq" id="NP_715862.1">
    <property type="nucleotide sequence ID" value="NC_004347.2"/>
</dbReference>
<dbReference type="RefSeq" id="WP_011070609.1">
    <property type="nucleotide sequence ID" value="NZ_CP053946.1"/>
</dbReference>
<dbReference type="STRING" id="211586.SO_0222"/>
<dbReference type="PaxDb" id="211586-SO_0222"/>
<dbReference type="GeneID" id="94726177"/>
<dbReference type="KEGG" id="son:SO_0222"/>
<dbReference type="PATRIC" id="fig|211586.12.peg.210"/>
<dbReference type="eggNOG" id="COG0244">
    <property type="taxonomic scope" value="Bacteria"/>
</dbReference>
<dbReference type="HOGENOM" id="CLU_092227_0_2_6"/>
<dbReference type="OrthoDB" id="9808307at2"/>
<dbReference type="PhylomeDB" id="Q8EK76"/>
<dbReference type="BioCyc" id="SONE211586:G1GMP-211-MONOMER"/>
<dbReference type="Proteomes" id="UP000008186">
    <property type="component" value="Chromosome"/>
</dbReference>
<dbReference type="GO" id="GO:0022625">
    <property type="term" value="C:cytosolic large ribosomal subunit"/>
    <property type="evidence" value="ECO:0000318"/>
    <property type="project" value="GO_Central"/>
</dbReference>
<dbReference type="GO" id="GO:0070180">
    <property type="term" value="F:large ribosomal subunit rRNA binding"/>
    <property type="evidence" value="ECO:0007669"/>
    <property type="project" value="UniProtKB-UniRule"/>
</dbReference>
<dbReference type="GO" id="GO:0003735">
    <property type="term" value="F:structural constituent of ribosome"/>
    <property type="evidence" value="ECO:0000318"/>
    <property type="project" value="GO_Central"/>
</dbReference>
<dbReference type="GO" id="GO:0006412">
    <property type="term" value="P:translation"/>
    <property type="evidence" value="ECO:0000318"/>
    <property type="project" value="GO_Central"/>
</dbReference>
<dbReference type="CDD" id="cd05797">
    <property type="entry name" value="Ribosomal_L10"/>
    <property type="match status" value="1"/>
</dbReference>
<dbReference type="FunFam" id="3.30.70.1730:FF:000001">
    <property type="entry name" value="50S ribosomal protein L10"/>
    <property type="match status" value="1"/>
</dbReference>
<dbReference type="Gene3D" id="3.30.70.1730">
    <property type="match status" value="1"/>
</dbReference>
<dbReference type="Gene3D" id="6.10.250.2350">
    <property type="match status" value="1"/>
</dbReference>
<dbReference type="HAMAP" id="MF_00362">
    <property type="entry name" value="Ribosomal_uL10"/>
    <property type="match status" value="1"/>
</dbReference>
<dbReference type="InterPro" id="IPR001790">
    <property type="entry name" value="Ribosomal_uL10"/>
</dbReference>
<dbReference type="InterPro" id="IPR043141">
    <property type="entry name" value="Ribosomal_uL10-like_sf"/>
</dbReference>
<dbReference type="InterPro" id="IPR022973">
    <property type="entry name" value="Ribosomal_uL10_bac"/>
</dbReference>
<dbReference type="InterPro" id="IPR047865">
    <property type="entry name" value="Ribosomal_uL10_bac_type"/>
</dbReference>
<dbReference type="InterPro" id="IPR002363">
    <property type="entry name" value="Ribosomal_uL10_CS_bac"/>
</dbReference>
<dbReference type="NCBIfam" id="NF000955">
    <property type="entry name" value="PRK00099.1-1"/>
    <property type="match status" value="1"/>
</dbReference>
<dbReference type="PANTHER" id="PTHR11560">
    <property type="entry name" value="39S RIBOSOMAL PROTEIN L10, MITOCHONDRIAL"/>
    <property type="match status" value="1"/>
</dbReference>
<dbReference type="Pfam" id="PF00466">
    <property type="entry name" value="Ribosomal_L10"/>
    <property type="match status" value="1"/>
</dbReference>
<dbReference type="SUPFAM" id="SSF160369">
    <property type="entry name" value="Ribosomal protein L10-like"/>
    <property type="match status" value="1"/>
</dbReference>
<dbReference type="PROSITE" id="PS01109">
    <property type="entry name" value="RIBOSOMAL_L10"/>
    <property type="match status" value="1"/>
</dbReference>
<name>RL10_SHEON</name>
<feature type="chain" id="PRO_0000154703" description="Large ribosomal subunit protein uL10">
    <location>
        <begin position="1"/>
        <end position="166"/>
    </location>
</feature>
<evidence type="ECO:0000255" key="1">
    <source>
        <dbReference type="HAMAP-Rule" id="MF_00362"/>
    </source>
</evidence>
<evidence type="ECO:0000305" key="2"/>